<sequence length="366" mass="39224">MAICIPVNLPDRSYNILIEKGSLANLGGEMSQLSLGKKVLLVSNPEIFDYYGQIAVNSLEKAGFAVFTHLIPAGENYKTLDAIAQVYDSALAHRLERSSTMVALGGGVIGDMTGFAAATWLRGVNFVQVPTTLLAMVDASIGGKTGVNHPQGKNLIGAFYQPKLVLIDPDVLKTLPVREFRAGMAEVIKYGVIWDAELFQQLEDSDNLASFSQIDGELLQTIITKSCQAKADVVSKDEKEAGLRAILNYGHTIAHGIESLTGYTSVNHGEAVALGMVAAGAIAVKLGMWTAGENQRQTDLIEKAALETRMPPLNADEMVNALTADKKVKDGQVRFILPTAIGQVTISDRVTPTLVREVLSPTESGQ</sequence>
<keyword id="KW-0028">Amino-acid biosynthesis</keyword>
<keyword id="KW-0057">Aromatic amino acid biosynthesis</keyword>
<keyword id="KW-0170">Cobalt</keyword>
<keyword id="KW-0963">Cytoplasm</keyword>
<keyword id="KW-0456">Lyase</keyword>
<keyword id="KW-0479">Metal-binding</keyword>
<keyword id="KW-0520">NAD</keyword>
<keyword id="KW-0547">Nucleotide-binding</keyword>
<keyword id="KW-0862">Zinc</keyword>
<dbReference type="EC" id="4.2.3.4" evidence="1"/>
<dbReference type="EMBL" id="AP009552">
    <property type="protein sequence ID" value="BAG02434.1"/>
    <property type="molecule type" value="Genomic_DNA"/>
</dbReference>
<dbReference type="RefSeq" id="WP_012265710.1">
    <property type="nucleotide sequence ID" value="NC_010296.1"/>
</dbReference>
<dbReference type="SMR" id="B0JID6"/>
<dbReference type="STRING" id="449447.MAE_26120"/>
<dbReference type="PaxDb" id="449447-MAE_26120"/>
<dbReference type="EnsemblBacteria" id="BAG02434">
    <property type="protein sequence ID" value="BAG02434"/>
    <property type="gene ID" value="MAE_26120"/>
</dbReference>
<dbReference type="KEGG" id="mar:MAE_26120"/>
<dbReference type="PATRIC" id="fig|449447.4.peg.2393"/>
<dbReference type="eggNOG" id="COG0337">
    <property type="taxonomic scope" value="Bacteria"/>
</dbReference>
<dbReference type="HOGENOM" id="CLU_001201_0_2_3"/>
<dbReference type="BioCyc" id="MAER449447:MAE_RS11425-MONOMER"/>
<dbReference type="UniPathway" id="UPA00053">
    <property type="reaction ID" value="UER00085"/>
</dbReference>
<dbReference type="Proteomes" id="UP000001510">
    <property type="component" value="Chromosome"/>
</dbReference>
<dbReference type="GO" id="GO:0005737">
    <property type="term" value="C:cytoplasm"/>
    <property type="evidence" value="ECO:0007669"/>
    <property type="project" value="UniProtKB-SubCell"/>
</dbReference>
<dbReference type="GO" id="GO:0003856">
    <property type="term" value="F:3-dehydroquinate synthase activity"/>
    <property type="evidence" value="ECO:0007669"/>
    <property type="project" value="UniProtKB-UniRule"/>
</dbReference>
<dbReference type="GO" id="GO:0046872">
    <property type="term" value="F:metal ion binding"/>
    <property type="evidence" value="ECO:0007669"/>
    <property type="project" value="UniProtKB-KW"/>
</dbReference>
<dbReference type="GO" id="GO:0000166">
    <property type="term" value="F:nucleotide binding"/>
    <property type="evidence" value="ECO:0007669"/>
    <property type="project" value="UniProtKB-KW"/>
</dbReference>
<dbReference type="GO" id="GO:0008652">
    <property type="term" value="P:amino acid biosynthetic process"/>
    <property type="evidence" value="ECO:0007669"/>
    <property type="project" value="UniProtKB-KW"/>
</dbReference>
<dbReference type="GO" id="GO:0009073">
    <property type="term" value="P:aromatic amino acid family biosynthetic process"/>
    <property type="evidence" value="ECO:0007669"/>
    <property type="project" value="UniProtKB-KW"/>
</dbReference>
<dbReference type="GO" id="GO:0009423">
    <property type="term" value="P:chorismate biosynthetic process"/>
    <property type="evidence" value="ECO:0007669"/>
    <property type="project" value="UniProtKB-UniRule"/>
</dbReference>
<dbReference type="CDD" id="cd08195">
    <property type="entry name" value="DHQS"/>
    <property type="match status" value="1"/>
</dbReference>
<dbReference type="FunFam" id="3.40.50.1970:FF:000001">
    <property type="entry name" value="3-dehydroquinate synthase"/>
    <property type="match status" value="1"/>
</dbReference>
<dbReference type="Gene3D" id="3.40.50.1970">
    <property type="match status" value="1"/>
</dbReference>
<dbReference type="Gene3D" id="1.20.1090.10">
    <property type="entry name" value="Dehydroquinate synthase-like - alpha domain"/>
    <property type="match status" value="1"/>
</dbReference>
<dbReference type="HAMAP" id="MF_00110">
    <property type="entry name" value="DHQ_synthase"/>
    <property type="match status" value="1"/>
</dbReference>
<dbReference type="InterPro" id="IPR050071">
    <property type="entry name" value="Dehydroquinate_synthase"/>
</dbReference>
<dbReference type="InterPro" id="IPR016037">
    <property type="entry name" value="DHQ_synth_AroB"/>
</dbReference>
<dbReference type="InterPro" id="IPR030963">
    <property type="entry name" value="DHQ_synth_fam"/>
</dbReference>
<dbReference type="InterPro" id="IPR030960">
    <property type="entry name" value="DHQS/DOIS_N"/>
</dbReference>
<dbReference type="InterPro" id="IPR056179">
    <property type="entry name" value="DHQS_C"/>
</dbReference>
<dbReference type="NCBIfam" id="TIGR01357">
    <property type="entry name" value="aroB"/>
    <property type="match status" value="1"/>
</dbReference>
<dbReference type="PANTHER" id="PTHR43622">
    <property type="entry name" value="3-DEHYDROQUINATE SYNTHASE"/>
    <property type="match status" value="1"/>
</dbReference>
<dbReference type="PANTHER" id="PTHR43622:SF7">
    <property type="entry name" value="3-DEHYDROQUINATE SYNTHASE, CHLOROPLASTIC"/>
    <property type="match status" value="1"/>
</dbReference>
<dbReference type="Pfam" id="PF01761">
    <property type="entry name" value="DHQ_synthase"/>
    <property type="match status" value="1"/>
</dbReference>
<dbReference type="Pfam" id="PF24621">
    <property type="entry name" value="DHQS_C"/>
    <property type="match status" value="1"/>
</dbReference>
<dbReference type="PIRSF" id="PIRSF001455">
    <property type="entry name" value="DHQ_synth"/>
    <property type="match status" value="1"/>
</dbReference>
<dbReference type="SUPFAM" id="SSF56796">
    <property type="entry name" value="Dehydroquinate synthase-like"/>
    <property type="match status" value="1"/>
</dbReference>
<name>AROB_MICAN</name>
<accession>B0JID6</accession>
<evidence type="ECO:0000255" key="1">
    <source>
        <dbReference type="HAMAP-Rule" id="MF_00110"/>
    </source>
</evidence>
<protein>
    <recommendedName>
        <fullName evidence="1">3-dehydroquinate synthase</fullName>
        <shortName evidence="1">DHQS</shortName>
        <ecNumber evidence="1">4.2.3.4</ecNumber>
    </recommendedName>
</protein>
<reference key="1">
    <citation type="journal article" date="2007" name="DNA Res.">
        <title>Complete genomic structure of the bloom-forming toxic cyanobacterium Microcystis aeruginosa NIES-843.</title>
        <authorList>
            <person name="Kaneko T."/>
            <person name="Nakajima N."/>
            <person name="Okamoto S."/>
            <person name="Suzuki I."/>
            <person name="Tanabe Y."/>
            <person name="Tamaoki M."/>
            <person name="Nakamura Y."/>
            <person name="Kasai F."/>
            <person name="Watanabe A."/>
            <person name="Kawashima K."/>
            <person name="Kishida Y."/>
            <person name="Ono A."/>
            <person name="Shimizu Y."/>
            <person name="Takahashi C."/>
            <person name="Minami C."/>
            <person name="Fujishiro T."/>
            <person name="Kohara M."/>
            <person name="Katoh M."/>
            <person name="Nakazaki N."/>
            <person name="Nakayama S."/>
            <person name="Yamada M."/>
            <person name="Tabata S."/>
            <person name="Watanabe M.M."/>
        </authorList>
    </citation>
    <scope>NUCLEOTIDE SEQUENCE [LARGE SCALE GENOMIC DNA]</scope>
    <source>
        <strain>NIES-843 / IAM M-247</strain>
    </source>
</reference>
<feature type="chain" id="PRO_1000094546" description="3-dehydroquinate synthase">
    <location>
        <begin position="1"/>
        <end position="366"/>
    </location>
</feature>
<feature type="binding site" evidence="1">
    <location>
        <begin position="107"/>
        <end position="111"/>
    </location>
    <ligand>
        <name>NAD(+)</name>
        <dbReference type="ChEBI" id="CHEBI:57540"/>
    </ligand>
</feature>
<feature type="binding site" evidence="1">
    <location>
        <begin position="131"/>
        <end position="132"/>
    </location>
    <ligand>
        <name>NAD(+)</name>
        <dbReference type="ChEBI" id="CHEBI:57540"/>
    </ligand>
</feature>
<feature type="binding site" evidence="1">
    <location>
        <position position="144"/>
    </location>
    <ligand>
        <name>NAD(+)</name>
        <dbReference type="ChEBI" id="CHEBI:57540"/>
    </ligand>
</feature>
<feature type="binding site" evidence="1">
    <location>
        <position position="153"/>
    </location>
    <ligand>
        <name>NAD(+)</name>
        <dbReference type="ChEBI" id="CHEBI:57540"/>
    </ligand>
</feature>
<feature type="binding site" evidence="1">
    <location>
        <position position="186"/>
    </location>
    <ligand>
        <name>Zn(2+)</name>
        <dbReference type="ChEBI" id="CHEBI:29105"/>
    </ligand>
</feature>
<feature type="binding site" evidence="1">
    <location>
        <position position="251"/>
    </location>
    <ligand>
        <name>Zn(2+)</name>
        <dbReference type="ChEBI" id="CHEBI:29105"/>
    </ligand>
</feature>
<feature type="binding site" evidence="1">
    <location>
        <position position="268"/>
    </location>
    <ligand>
        <name>Zn(2+)</name>
        <dbReference type="ChEBI" id="CHEBI:29105"/>
    </ligand>
</feature>
<gene>
    <name evidence="1" type="primary">aroB</name>
    <name type="ordered locus">MAE_26120</name>
</gene>
<comment type="function">
    <text evidence="1">Catalyzes the conversion of 3-deoxy-D-arabino-heptulosonate 7-phosphate (DAHP) to dehydroquinate (DHQ).</text>
</comment>
<comment type="catalytic activity">
    <reaction evidence="1">
        <text>7-phospho-2-dehydro-3-deoxy-D-arabino-heptonate = 3-dehydroquinate + phosphate</text>
        <dbReference type="Rhea" id="RHEA:21968"/>
        <dbReference type="ChEBI" id="CHEBI:32364"/>
        <dbReference type="ChEBI" id="CHEBI:43474"/>
        <dbReference type="ChEBI" id="CHEBI:58394"/>
        <dbReference type="EC" id="4.2.3.4"/>
    </reaction>
</comment>
<comment type="cofactor">
    <cofactor evidence="1">
        <name>Co(2+)</name>
        <dbReference type="ChEBI" id="CHEBI:48828"/>
    </cofactor>
    <cofactor evidence="1">
        <name>Zn(2+)</name>
        <dbReference type="ChEBI" id="CHEBI:29105"/>
    </cofactor>
    <text evidence="1">Binds 1 divalent metal cation per subunit. Can use either Co(2+) or Zn(2+).</text>
</comment>
<comment type="cofactor">
    <cofactor evidence="1">
        <name>NAD(+)</name>
        <dbReference type="ChEBI" id="CHEBI:57540"/>
    </cofactor>
</comment>
<comment type="pathway">
    <text evidence="1">Metabolic intermediate biosynthesis; chorismate biosynthesis; chorismate from D-erythrose 4-phosphate and phosphoenolpyruvate: step 2/7.</text>
</comment>
<comment type="subcellular location">
    <subcellularLocation>
        <location evidence="1">Cytoplasm</location>
    </subcellularLocation>
</comment>
<comment type="similarity">
    <text evidence="1">Belongs to the sugar phosphate cyclases superfamily. Dehydroquinate synthase family.</text>
</comment>
<organism>
    <name type="scientific">Microcystis aeruginosa (strain NIES-843 / IAM M-2473)</name>
    <dbReference type="NCBI Taxonomy" id="449447"/>
    <lineage>
        <taxon>Bacteria</taxon>
        <taxon>Bacillati</taxon>
        <taxon>Cyanobacteriota</taxon>
        <taxon>Cyanophyceae</taxon>
        <taxon>Oscillatoriophycideae</taxon>
        <taxon>Chroococcales</taxon>
        <taxon>Microcystaceae</taxon>
        <taxon>Microcystis</taxon>
    </lineage>
</organism>
<proteinExistence type="inferred from homology"/>